<proteinExistence type="inferred from homology"/>
<accession>Q8Z0M8</accession>
<organism>
    <name type="scientific">Nostoc sp. (strain PCC 7120 / SAG 25.82 / UTEX 2576)</name>
    <dbReference type="NCBI Taxonomy" id="103690"/>
    <lineage>
        <taxon>Bacteria</taxon>
        <taxon>Bacillati</taxon>
        <taxon>Cyanobacteriota</taxon>
        <taxon>Cyanophyceae</taxon>
        <taxon>Nostocales</taxon>
        <taxon>Nostocaceae</taxon>
        <taxon>Nostoc</taxon>
    </lineage>
</organism>
<feature type="chain" id="PRO_0000102611" description="Ribosome-binding factor A">
    <location>
        <begin position="1"/>
        <end position="133"/>
    </location>
</feature>
<name>RBFA_NOSS1</name>
<gene>
    <name evidence="1" type="primary">rbfA</name>
    <name type="ordered locus">alr0063</name>
</gene>
<reference key="1">
    <citation type="journal article" date="2001" name="DNA Res.">
        <title>Complete genomic sequence of the filamentous nitrogen-fixing cyanobacterium Anabaena sp. strain PCC 7120.</title>
        <authorList>
            <person name="Kaneko T."/>
            <person name="Nakamura Y."/>
            <person name="Wolk C.P."/>
            <person name="Kuritz T."/>
            <person name="Sasamoto S."/>
            <person name="Watanabe A."/>
            <person name="Iriguchi M."/>
            <person name="Ishikawa A."/>
            <person name="Kawashima K."/>
            <person name="Kimura T."/>
            <person name="Kishida Y."/>
            <person name="Kohara M."/>
            <person name="Matsumoto M."/>
            <person name="Matsuno A."/>
            <person name="Muraki A."/>
            <person name="Nakazaki N."/>
            <person name="Shimpo S."/>
            <person name="Sugimoto M."/>
            <person name="Takazawa M."/>
            <person name="Yamada M."/>
            <person name="Yasuda M."/>
            <person name="Tabata S."/>
        </authorList>
    </citation>
    <scope>NUCLEOTIDE SEQUENCE [LARGE SCALE GENOMIC DNA]</scope>
    <source>
        <strain>PCC 7120 / SAG 25.82 / UTEX 2576</strain>
    </source>
</reference>
<protein>
    <recommendedName>
        <fullName evidence="1">Ribosome-binding factor A</fullName>
    </recommendedName>
</protein>
<evidence type="ECO:0000255" key="1">
    <source>
        <dbReference type="HAMAP-Rule" id="MF_00003"/>
    </source>
</evidence>
<comment type="function">
    <text evidence="1">One of several proteins that assist in the late maturation steps of the functional core of the 30S ribosomal subunit. Associates with free 30S ribosomal subunits (but not with 30S subunits that are part of 70S ribosomes or polysomes). Required for efficient processing of 16S rRNA. May interact with the 5'-terminal helix region of 16S rRNA.</text>
</comment>
<comment type="subunit">
    <text evidence="1">Monomer. Binds 30S ribosomal subunits, but not 50S ribosomal subunits or 70S ribosomes.</text>
</comment>
<comment type="subcellular location">
    <subcellularLocation>
        <location evidence="1">Cytoplasm</location>
    </subcellularLocation>
</comment>
<comment type="similarity">
    <text evidence="1">Belongs to the RbfA family.</text>
</comment>
<keyword id="KW-0963">Cytoplasm</keyword>
<keyword id="KW-1185">Reference proteome</keyword>
<keyword id="KW-0690">Ribosome biogenesis</keyword>
<sequence length="133" mass="14666">MATNRRVSRVAELIKREVSQMLINGIKDDRVGTGMVSVTDVDVSGDLQHAKIYVSIYGTEEAKAETMAGLKSATGFVRSELGARVRLRRTPEVTFIEDRSIERGTKVLTLLNKLENARSPDDIPSADDSLDED</sequence>
<dbReference type="EMBL" id="BA000019">
    <property type="protein sequence ID" value="BAB77587.1"/>
    <property type="molecule type" value="Genomic_DNA"/>
</dbReference>
<dbReference type="PIR" id="AG1814">
    <property type="entry name" value="AG1814"/>
</dbReference>
<dbReference type="RefSeq" id="WP_010994240.1">
    <property type="nucleotide sequence ID" value="NZ_RSCN01000016.1"/>
</dbReference>
<dbReference type="SMR" id="Q8Z0M8"/>
<dbReference type="STRING" id="103690.gene:10492067"/>
<dbReference type="KEGG" id="ana:alr0063"/>
<dbReference type="eggNOG" id="COG0858">
    <property type="taxonomic scope" value="Bacteria"/>
</dbReference>
<dbReference type="OrthoDB" id="307788at2"/>
<dbReference type="Proteomes" id="UP000002483">
    <property type="component" value="Chromosome"/>
</dbReference>
<dbReference type="GO" id="GO:0005829">
    <property type="term" value="C:cytosol"/>
    <property type="evidence" value="ECO:0007669"/>
    <property type="project" value="TreeGrafter"/>
</dbReference>
<dbReference type="GO" id="GO:0043024">
    <property type="term" value="F:ribosomal small subunit binding"/>
    <property type="evidence" value="ECO:0007669"/>
    <property type="project" value="TreeGrafter"/>
</dbReference>
<dbReference type="GO" id="GO:0030490">
    <property type="term" value="P:maturation of SSU-rRNA"/>
    <property type="evidence" value="ECO:0007669"/>
    <property type="project" value="UniProtKB-UniRule"/>
</dbReference>
<dbReference type="Gene3D" id="3.30.300.20">
    <property type="match status" value="1"/>
</dbReference>
<dbReference type="HAMAP" id="MF_00003">
    <property type="entry name" value="RbfA"/>
    <property type="match status" value="1"/>
</dbReference>
<dbReference type="InterPro" id="IPR015946">
    <property type="entry name" value="KH_dom-like_a/b"/>
</dbReference>
<dbReference type="InterPro" id="IPR000238">
    <property type="entry name" value="RbfA"/>
</dbReference>
<dbReference type="InterPro" id="IPR023799">
    <property type="entry name" value="RbfA_dom_sf"/>
</dbReference>
<dbReference type="InterPro" id="IPR020053">
    <property type="entry name" value="Ribosome-bd_factorA_CS"/>
</dbReference>
<dbReference type="NCBIfam" id="TIGR00082">
    <property type="entry name" value="rbfA"/>
    <property type="match status" value="1"/>
</dbReference>
<dbReference type="PANTHER" id="PTHR33515">
    <property type="entry name" value="RIBOSOME-BINDING FACTOR A, CHLOROPLASTIC-RELATED"/>
    <property type="match status" value="1"/>
</dbReference>
<dbReference type="PANTHER" id="PTHR33515:SF1">
    <property type="entry name" value="RIBOSOME-BINDING FACTOR A, CHLOROPLASTIC-RELATED"/>
    <property type="match status" value="1"/>
</dbReference>
<dbReference type="Pfam" id="PF02033">
    <property type="entry name" value="RBFA"/>
    <property type="match status" value="1"/>
</dbReference>
<dbReference type="SUPFAM" id="SSF89919">
    <property type="entry name" value="Ribosome-binding factor A, RbfA"/>
    <property type="match status" value="1"/>
</dbReference>
<dbReference type="PROSITE" id="PS01319">
    <property type="entry name" value="RBFA"/>
    <property type="match status" value="1"/>
</dbReference>